<sequence>MASPPPPPKLPVPGRRNILVTSALPYVNNVPHLGNIIGCVLSADVFARYCRLRGYNVIYICGTDEYGTATETKAMEEKCSPKEICDKYHAVHSEVYKWFDIKFDKFGRTSSPQQTEVCQAIFQKLMENNWLTENTMQQLYCDTCQRFLADRLVEGKCPTEGCNYEAARGDQCENCSKLLNPTELIDPKCKVCKNTPRVRDTDHLFLELPLLSDKLVNYINETSVAGMWSQNAIQATNAWLKEGLKPRCITRDLKWGVPVPHEKYKDKVFYVWFDAPIGYVSITASYTPDWEKWWKDPDNVELFQFMGKDNVPFHTVMFPSTLLGTGEKWTMMKTISVTEYLNYEAGKFSKSHGIGVFGNDAKDTNIPPEVWRYYLLTNRPEVSDTLFTWADLQAKLNSELLNNLGNFINRVLSFVAKPAGAGYDSIVPDAPNAESHPLTKALVEKTNKWVEQYLEAMEKVKLKQGLKSAMGISSDGNAYLQESQFWKLYKEDPAACAVVMKTSVGVVYLLACLLEPFMPSFSNEVLLQLNMTPEESLSFCDDKGEIAKAKRPWDFVSAGHKIGKPSPLFKELKDEEVESFRNKFAGSQAERSSKAQADAEAKKVADKLKGTKLSDGGQKKEQKKQSGGSKSKNAEVDVTVAKLDIRVGLIRKAQKHPDADSLYVEEIDVGEEAPRTVVSGLVKFIPLEEMQNRKVCVLCNLKPVAMRGIKSHAMVLAASNEDHTKVELVEPPESAAVGERVTFAGYSGEPEASLNAKSKTWEKLSADLHSNGELVACYKDVPFTTSAGVCKVKSIASGEIR</sequence>
<comment type="catalytic activity">
    <reaction>
        <text>tRNA(Met) + L-methionine + ATP = L-methionyl-tRNA(Met) + AMP + diphosphate</text>
        <dbReference type="Rhea" id="RHEA:13481"/>
        <dbReference type="Rhea" id="RHEA-COMP:9667"/>
        <dbReference type="Rhea" id="RHEA-COMP:9698"/>
        <dbReference type="ChEBI" id="CHEBI:30616"/>
        <dbReference type="ChEBI" id="CHEBI:33019"/>
        <dbReference type="ChEBI" id="CHEBI:57844"/>
        <dbReference type="ChEBI" id="CHEBI:78442"/>
        <dbReference type="ChEBI" id="CHEBI:78530"/>
        <dbReference type="ChEBI" id="CHEBI:456215"/>
        <dbReference type="EC" id="6.1.1.10"/>
    </reaction>
</comment>
<comment type="subcellular location">
    <subcellularLocation>
        <location evidence="3">Cytoplasm</location>
    </subcellularLocation>
</comment>
<comment type="similarity">
    <text evidence="3">Belongs to the class-I aminoacyl-tRNA synthetase family.</text>
</comment>
<keyword id="KW-0030">Aminoacyl-tRNA synthetase</keyword>
<keyword id="KW-0067">ATP-binding</keyword>
<keyword id="KW-0963">Cytoplasm</keyword>
<keyword id="KW-0436">Ligase</keyword>
<keyword id="KW-0547">Nucleotide-binding</keyword>
<keyword id="KW-0648">Protein biosynthesis</keyword>
<keyword id="KW-1185">Reference proteome</keyword>
<keyword id="KW-0694">RNA-binding</keyword>
<keyword id="KW-0820">tRNA-binding</keyword>
<dbReference type="EC" id="6.1.1.10"/>
<dbReference type="EMBL" id="AF040700">
    <property type="protein sequence ID" value="AAC99620.1"/>
    <property type="molecule type" value="mRNA"/>
</dbReference>
<dbReference type="EMBL" id="AP003618">
    <property type="protein sequence ID" value="BAD61657.1"/>
    <property type="molecule type" value="Genomic_DNA"/>
</dbReference>
<dbReference type="EMBL" id="AP014962">
    <property type="status" value="NOT_ANNOTATED_CDS"/>
    <property type="molecule type" value="Genomic_DNA"/>
</dbReference>
<dbReference type="RefSeq" id="XP_015643979.1">
    <property type="nucleotide sequence ID" value="XM_015788493.1"/>
</dbReference>
<dbReference type="SMR" id="Q9ZTS1"/>
<dbReference type="FunCoup" id="Q9ZTS1">
    <property type="interactions" value="3551"/>
</dbReference>
<dbReference type="STRING" id="39947.Q9ZTS1"/>
<dbReference type="PaxDb" id="39947-Q9ZTS1"/>
<dbReference type="eggNOG" id="KOG2241">
    <property type="taxonomic scope" value="Eukaryota"/>
</dbReference>
<dbReference type="InParanoid" id="Q9ZTS1"/>
<dbReference type="OrthoDB" id="5844513at2759"/>
<dbReference type="BRENDA" id="6.1.1.10">
    <property type="organism ID" value="4460"/>
</dbReference>
<dbReference type="Proteomes" id="UP000000763">
    <property type="component" value="Chromosome 6"/>
</dbReference>
<dbReference type="Proteomes" id="UP000059680">
    <property type="component" value="Chromosome 6"/>
</dbReference>
<dbReference type="GO" id="GO:0017101">
    <property type="term" value="C:aminoacyl-tRNA synthetase multienzyme complex"/>
    <property type="evidence" value="ECO:0000318"/>
    <property type="project" value="GO_Central"/>
</dbReference>
<dbReference type="GO" id="GO:0005829">
    <property type="term" value="C:cytosol"/>
    <property type="evidence" value="ECO:0000318"/>
    <property type="project" value="GO_Central"/>
</dbReference>
<dbReference type="GO" id="GO:0005524">
    <property type="term" value="F:ATP binding"/>
    <property type="evidence" value="ECO:0007669"/>
    <property type="project" value="UniProtKB-KW"/>
</dbReference>
<dbReference type="GO" id="GO:0004825">
    <property type="term" value="F:methionine-tRNA ligase activity"/>
    <property type="evidence" value="ECO:0000318"/>
    <property type="project" value="GO_Central"/>
</dbReference>
<dbReference type="GO" id="GO:0000049">
    <property type="term" value="F:tRNA binding"/>
    <property type="evidence" value="ECO:0007669"/>
    <property type="project" value="UniProtKB-KW"/>
</dbReference>
<dbReference type="GO" id="GO:0006431">
    <property type="term" value="P:methionyl-tRNA aminoacylation"/>
    <property type="evidence" value="ECO:0000318"/>
    <property type="project" value="GO_Central"/>
</dbReference>
<dbReference type="GO" id="GO:0009791">
    <property type="term" value="P:post-embryonic development"/>
    <property type="evidence" value="ECO:0007669"/>
    <property type="project" value="UniProtKB-ARBA"/>
</dbReference>
<dbReference type="GO" id="GO:0048608">
    <property type="term" value="P:reproductive structure development"/>
    <property type="evidence" value="ECO:0007669"/>
    <property type="project" value="UniProtKB-ARBA"/>
</dbReference>
<dbReference type="CDD" id="cd07957">
    <property type="entry name" value="Anticodon_Ia_Met"/>
    <property type="match status" value="1"/>
</dbReference>
<dbReference type="CDD" id="cd00814">
    <property type="entry name" value="MetRS_core"/>
    <property type="match status" value="1"/>
</dbReference>
<dbReference type="CDD" id="cd02799">
    <property type="entry name" value="tRNA_bind_EMAP-II_like"/>
    <property type="match status" value="1"/>
</dbReference>
<dbReference type="FunFam" id="2.20.28.20:FF:000001">
    <property type="entry name" value="Methionine--tRNA ligase"/>
    <property type="match status" value="1"/>
</dbReference>
<dbReference type="FunFam" id="1.10.730.10:FF:000024">
    <property type="entry name" value="Methionine--tRNA ligase cytoplasmic"/>
    <property type="match status" value="1"/>
</dbReference>
<dbReference type="FunFam" id="2.40.50.140:FF:000047">
    <property type="entry name" value="tyrosine--tRNA ligase, cytoplasmic isoform X2"/>
    <property type="match status" value="1"/>
</dbReference>
<dbReference type="Gene3D" id="3.40.50.620">
    <property type="entry name" value="HUPs"/>
    <property type="match status" value="1"/>
</dbReference>
<dbReference type="Gene3D" id="1.10.730.10">
    <property type="entry name" value="Isoleucyl-tRNA Synthetase, Domain 1"/>
    <property type="match status" value="1"/>
</dbReference>
<dbReference type="Gene3D" id="2.20.28.20">
    <property type="entry name" value="Methionyl-tRNA synthetase, Zn-domain"/>
    <property type="match status" value="1"/>
</dbReference>
<dbReference type="Gene3D" id="2.40.50.140">
    <property type="entry name" value="Nucleic acid-binding proteins"/>
    <property type="match status" value="1"/>
</dbReference>
<dbReference type="HAMAP" id="MF_00098">
    <property type="entry name" value="Met_tRNA_synth_type1"/>
    <property type="match status" value="1"/>
</dbReference>
<dbReference type="InterPro" id="IPR001412">
    <property type="entry name" value="aa-tRNA-synth_I_CS"/>
</dbReference>
<dbReference type="InterPro" id="IPR041872">
    <property type="entry name" value="Anticodon_Met"/>
</dbReference>
<dbReference type="InterPro" id="IPR023458">
    <property type="entry name" value="Met-tRNA_ligase_1"/>
</dbReference>
<dbReference type="InterPro" id="IPR014758">
    <property type="entry name" value="Met-tRNA_synth"/>
</dbReference>
<dbReference type="InterPro" id="IPR015413">
    <property type="entry name" value="Methionyl/Leucyl_tRNA_Synth"/>
</dbReference>
<dbReference type="InterPro" id="IPR033911">
    <property type="entry name" value="MetRS_core"/>
</dbReference>
<dbReference type="InterPro" id="IPR029038">
    <property type="entry name" value="MetRS_Zn"/>
</dbReference>
<dbReference type="InterPro" id="IPR012340">
    <property type="entry name" value="NA-bd_OB-fold"/>
</dbReference>
<dbReference type="InterPro" id="IPR014729">
    <property type="entry name" value="Rossmann-like_a/b/a_fold"/>
</dbReference>
<dbReference type="InterPro" id="IPR002547">
    <property type="entry name" value="tRNA-bd_dom"/>
</dbReference>
<dbReference type="InterPro" id="IPR009080">
    <property type="entry name" value="tRNAsynth_Ia_anticodon-bd"/>
</dbReference>
<dbReference type="NCBIfam" id="TIGR00398">
    <property type="entry name" value="metG"/>
    <property type="match status" value="1"/>
</dbReference>
<dbReference type="NCBIfam" id="NF001100">
    <property type="entry name" value="PRK00133.1"/>
    <property type="match status" value="1"/>
</dbReference>
<dbReference type="PANTHER" id="PTHR45765">
    <property type="entry name" value="METHIONINE--TRNA LIGASE"/>
    <property type="match status" value="1"/>
</dbReference>
<dbReference type="PANTHER" id="PTHR45765:SF1">
    <property type="entry name" value="METHIONINE--TRNA LIGASE, CYTOPLASMIC"/>
    <property type="match status" value="1"/>
</dbReference>
<dbReference type="Pfam" id="PF19303">
    <property type="entry name" value="Anticodon_3"/>
    <property type="match status" value="1"/>
</dbReference>
<dbReference type="Pfam" id="PF09334">
    <property type="entry name" value="tRNA-synt_1g"/>
    <property type="match status" value="1"/>
</dbReference>
<dbReference type="Pfam" id="PF01588">
    <property type="entry name" value="tRNA_bind"/>
    <property type="match status" value="1"/>
</dbReference>
<dbReference type="PRINTS" id="PR01041">
    <property type="entry name" value="TRNASYNTHMET"/>
</dbReference>
<dbReference type="SUPFAM" id="SSF47323">
    <property type="entry name" value="Anticodon-binding domain of a subclass of class I aminoacyl-tRNA synthetases"/>
    <property type="match status" value="1"/>
</dbReference>
<dbReference type="SUPFAM" id="SSF57770">
    <property type="entry name" value="Methionyl-tRNA synthetase (MetRS), Zn-domain"/>
    <property type="match status" value="1"/>
</dbReference>
<dbReference type="SUPFAM" id="SSF50249">
    <property type="entry name" value="Nucleic acid-binding proteins"/>
    <property type="match status" value="1"/>
</dbReference>
<dbReference type="SUPFAM" id="SSF52374">
    <property type="entry name" value="Nucleotidylyl transferase"/>
    <property type="match status" value="1"/>
</dbReference>
<dbReference type="PROSITE" id="PS00178">
    <property type="entry name" value="AA_TRNA_LIGASE_I"/>
    <property type="match status" value="1"/>
</dbReference>
<dbReference type="PROSITE" id="PS50886">
    <property type="entry name" value="TRBD"/>
    <property type="match status" value="1"/>
</dbReference>
<feature type="chain" id="PRO_0000139267" description="Probable methionine--tRNA ligase">
    <location>
        <begin position="1"/>
        <end position="801"/>
    </location>
</feature>
<feature type="domain" description="tRNA-binding">
    <location>
        <begin position="639"/>
        <end position="742"/>
    </location>
</feature>
<feature type="region of interest" description="Disordered" evidence="2">
    <location>
        <begin position="606"/>
        <end position="633"/>
    </location>
</feature>
<feature type="short sequence motif" description="'HIGH' region">
    <location>
        <begin position="25"/>
        <end position="35"/>
    </location>
</feature>
<feature type="short sequence motif" description="'KMSKS' region">
    <location>
        <begin position="347"/>
        <end position="351"/>
    </location>
</feature>
<feature type="binding site" evidence="1">
    <location>
        <position position="350"/>
    </location>
    <ligand>
        <name>ATP</name>
        <dbReference type="ChEBI" id="CHEBI:30616"/>
    </ligand>
</feature>
<feature type="sequence conflict" description="In Ref. 1; AAC99620." evidence="3" ref="1">
    <original>P</original>
    <variation>PPPP</variation>
    <location>
        <position position="8"/>
    </location>
</feature>
<feature type="sequence conflict" description="In Ref. 1; AAC99620." evidence="3" ref="1">
    <original>V</original>
    <variation>A</variation>
    <location>
        <position position="443"/>
    </location>
</feature>
<organism>
    <name type="scientific">Oryza sativa subsp. japonica</name>
    <name type="common">Rice</name>
    <dbReference type="NCBI Taxonomy" id="39947"/>
    <lineage>
        <taxon>Eukaryota</taxon>
        <taxon>Viridiplantae</taxon>
        <taxon>Streptophyta</taxon>
        <taxon>Embryophyta</taxon>
        <taxon>Tracheophyta</taxon>
        <taxon>Spermatophyta</taxon>
        <taxon>Magnoliopsida</taxon>
        <taxon>Liliopsida</taxon>
        <taxon>Poales</taxon>
        <taxon>Poaceae</taxon>
        <taxon>BOP clade</taxon>
        <taxon>Oryzoideae</taxon>
        <taxon>Oryzeae</taxon>
        <taxon>Oryzinae</taxon>
        <taxon>Oryza</taxon>
        <taxon>Oryza sativa</taxon>
    </lineage>
</organism>
<name>SYM_ORYSJ</name>
<evidence type="ECO:0000250" key="1"/>
<evidence type="ECO:0000256" key="2">
    <source>
        <dbReference type="SAM" id="MobiDB-lite"/>
    </source>
</evidence>
<evidence type="ECO:0000305" key="3"/>
<reference key="1">
    <citation type="journal article" date="2000" name="EMBO J.">
        <title>A recurrent general RNA binding domain appended to plant methionyl-tRNA synthetase acts as a cis-acting cofactor for aminoacylation.</title>
        <authorList>
            <person name="Kaminska M."/>
            <person name="Deniziak M."/>
            <person name="Kerjan P."/>
            <person name="Barciszewski J."/>
            <person name="Mirande M."/>
        </authorList>
    </citation>
    <scope>NUCLEOTIDE SEQUENCE [MRNA]</scope>
</reference>
<reference key="2">
    <citation type="journal article" date="2005" name="Nature">
        <title>The map-based sequence of the rice genome.</title>
        <authorList>
            <consortium name="International rice genome sequencing project (IRGSP)"/>
        </authorList>
    </citation>
    <scope>NUCLEOTIDE SEQUENCE [LARGE SCALE GENOMIC DNA]</scope>
    <source>
        <strain>cv. Nipponbare</strain>
    </source>
</reference>
<reference key="3">
    <citation type="journal article" date="2013" name="Rice">
        <title>Improvement of the Oryza sativa Nipponbare reference genome using next generation sequence and optical map data.</title>
        <authorList>
            <person name="Kawahara Y."/>
            <person name="de la Bastide M."/>
            <person name="Hamilton J.P."/>
            <person name="Kanamori H."/>
            <person name="McCombie W.R."/>
            <person name="Ouyang S."/>
            <person name="Schwartz D.C."/>
            <person name="Tanaka T."/>
            <person name="Wu J."/>
            <person name="Zhou S."/>
            <person name="Childs K.L."/>
            <person name="Davidson R.M."/>
            <person name="Lin H."/>
            <person name="Quesada-Ocampo L."/>
            <person name="Vaillancourt B."/>
            <person name="Sakai H."/>
            <person name="Lee S.S."/>
            <person name="Kim J."/>
            <person name="Numa H."/>
            <person name="Itoh T."/>
            <person name="Buell C.R."/>
            <person name="Matsumoto T."/>
        </authorList>
    </citation>
    <scope>GENOME REANNOTATION</scope>
    <source>
        <strain>cv. Nipponbare</strain>
    </source>
</reference>
<protein>
    <recommendedName>
        <fullName>Probable methionine--tRNA ligase</fullName>
        <ecNumber>6.1.1.10</ecNumber>
    </recommendedName>
    <alternativeName>
        <fullName>Methionyl-tRNA synthetase</fullName>
        <shortName>MetRS</shortName>
    </alternativeName>
</protein>
<gene>
    <name type="ordered locus">Os06g0508700</name>
    <name type="ordered locus">LOC_Os06g31210</name>
    <name type="ORF">P0561B08.33</name>
</gene>
<proteinExistence type="evidence at transcript level"/>
<accession>Q9ZTS1</accession>
<accession>Q5Z9M1</accession>